<name>Y1827_ENTFA</name>
<comment type="similarity">
    <text evidence="1">Belongs to the LarC family.</text>
</comment>
<keyword id="KW-0533">Nickel</keyword>
<keyword id="KW-1185">Reference proteome</keyword>
<sequence>MNDRFVCSLIEKSDLSNFVKKHSKNVFYDIAKAEAAVHQQTIDTIHFHEVGAIDSIVDIVGFFILWEQLEIEQVYSTPITDGSGTITIAHGVMPIPVPAVMELRKETNLIIQQDFEIKTELVTPTGLAIFKELSPLFVAPEQRLIEKIGYGFGKRETGKFNALRGSIFTETHSKKKRTEHHDQVLKIETNIDNQTPEQLGYVMDLLLEHGALDVFFTPIHMKKNRSAILLTVLTTTEEKEYFTELLFKHTSTIGMRFQTMERSVMDRSFKILETPFGKVHIKKNHYHGLLKESIEYQDCERIAKQYNFTIEEVYRLVQTLNNKTID</sequence>
<evidence type="ECO:0000305" key="1"/>
<proteinExistence type="inferred from homology"/>
<dbReference type="EMBL" id="AE016830">
    <property type="protein sequence ID" value="AAO81594.1"/>
    <property type="molecule type" value="Genomic_DNA"/>
</dbReference>
<dbReference type="RefSeq" id="NP_815524.1">
    <property type="nucleotide sequence ID" value="NC_004668.1"/>
</dbReference>
<dbReference type="SMR" id="Q833U9"/>
<dbReference type="STRING" id="226185.EF_1827"/>
<dbReference type="DNASU" id="1200712"/>
<dbReference type="EnsemblBacteria" id="AAO81594">
    <property type="protein sequence ID" value="AAO81594"/>
    <property type="gene ID" value="EF_1827"/>
</dbReference>
<dbReference type="KEGG" id="efa:EF1827"/>
<dbReference type="PATRIC" id="fig|226185.45.peg.1693"/>
<dbReference type="eggNOG" id="COG1641">
    <property type="taxonomic scope" value="Bacteria"/>
</dbReference>
<dbReference type="HOGENOM" id="CLU_028523_2_0_9"/>
<dbReference type="Proteomes" id="UP000001415">
    <property type="component" value="Chromosome"/>
</dbReference>
<dbReference type="Gene3D" id="3.30.70.1380">
    <property type="entry name" value="Transcriptional regulatory protein pf0864 domain like"/>
    <property type="match status" value="1"/>
</dbReference>
<dbReference type="InterPro" id="IPR002822">
    <property type="entry name" value="Ni_insertion"/>
</dbReference>
<dbReference type="NCBIfam" id="TIGR00299">
    <property type="entry name" value="nickel pincer cofactor biosynthesis protein LarC"/>
    <property type="match status" value="1"/>
</dbReference>
<dbReference type="PANTHER" id="PTHR36566">
    <property type="entry name" value="NICKEL INSERTION PROTEIN-RELATED"/>
    <property type="match status" value="1"/>
</dbReference>
<dbReference type="PANTHER" id="PTHR36566:SF1">
    <property type="entry name" value="PYRIDINIUM-3,5-BISTHIOCARBOXYLIC ACID MONONUCLEOTIDE NICKEL INSERTION PROTEIN"/>
    <property type="match status" value="1"/>
</dbReference>
<dbReference type="Pfam" id="PF01969">
    <property type="entry name" value="Ni_insertion"/>
    <property type="match status" value="1"/>
</dbReference>
<protein>
    <recommendedName>
        <fullName evidence="1">Putative nickel insertion protein</fullName>
    </recommendedName>
</protein>
<feature type="chain" id="PRO_0000146846" description="Putative nickel insertion protein">
    <location>
        <begin position="1"/>
        <end position="326"/>
    </location>
</feature>
<organism>
    <name type="scientific">Enterococcus faecalis (strain ATCC 700802 / V583)</name>
    <dbReference type="NCBI Taxonomy" id="226185"/>
    <lineage>
        <taxon>Bacteria</taxon>
        <taxon>Bacillati</taxon>
        <taxon>Bacillota</taxon>
        <taxon>Bacilli</taxon>
        <taxon>Lactobacillales</taxon>
        <taxon>Enterococcaceae</taxon>
        <taxon>Enterococcus</taxon>
    </lineage>
</organism>
<gene>
    <name type="ordered locus">EF_1827</name>
</gene>
<accession>Q833U9</accession>
<reference key="1">
    <citation type="journal article" date="2003" name="Science">
        <title>Role of mobile DNA in the evolution of vancomycin-resistant Enterococcus faecalis.</title>
        <authorList>
            <person name="Paulsen I.T."/>
            <person name="Banerjei L."/>
            <person name="Myers G.S.A."/>
            <person name="Nelson K.E."/>
            <person name="Seshadri R."/>
            <person name="Read T.D."/>
            <person name="Fouts D.E."/>
            <person name="Eisen J.A."/>
            <person name="Gill S.R."/>
            <person name="Heidelberg J.F."/>
            <person name="Tettelin H."/>
            <person name="Dodson R.J."/>
            <person name="Umayam L.A."/>
            <person name="Brinkac L.M."/>
            <person name="Beanan M.J."/>
            <person name="Daugherty S.C."/>
            <person name="DeBoy R.T."/>
            <person name="Durkin S.A."/>
            <person name="Kolonay J.F."/>
            <person name="Madupu R."/>
            <person name="Nelson W.C."/>
            <person name="Vamathevan J.J."/>
            <person name="Tran B."/>
            <person name="Upton J."/>
            <person name="Hansen T."/>
            <person name="Shetty J."/>
            <person name="Khouri H.M."/>
            <person name="Utterback T.R."/>
            <person name="Radune D."/>
            <person name="Ketchum K.A."/>
            <person name="Dougherty B.A."/>
            <person name="Fraser C.M."/>
        </authorList>
    </citation>
    <scope>NUCLEOTIDE SEQUENCE [LARGE SCALE GENOMIC DNA]</scope>
    <source>
        <strain>ATCC 700802 / V583</strain>
    </source>
</reference>